<sequence length="153" mass="17256">MYAVVQVRGVVNTRRDIKETLKMLRLHHINHCVIVPETPEYLGMIRKAKDFVAFGEVDAATLATILTTRGRLTGNKPLTEEYVKSATSYGSIEEFASALVNGEVRMKDVPELKPVLRMHPPRKGYKTTKRTYTQGGALGYYGTEINDLLIKMR</sequence>
<organism>
    <name type="scientific">Methanocorpusculum labreanum (strain ATCC 43576 / DSM 4855 / Z)</name>
    <dbReference type="NCBI Taxonomy" id="410358"/>
    <lineage>
        <taxon>Archaea</taxon>
        <taxon>Methanobacteriati</taxon>
        <taxon>Methanobacteriota</taxon>
        <taxon>Stenosarchaea group</taxon>
        <taxon>Methanomicrobia</taxon>
        <taxon>Methanomicrobiales</taxon>
        <taxon>Methanocorpusculaceae</taxon>
        <taxon>Methanocorpusculum</taxon>
    </lineage>
</organism>
<proteinExistence type="inferred from homology"/>
<accession>A2SPM3</accession>
<reference key="1">
    <citation type="journal article" date="2009" name="Stand. Genomic Sci.">
        <title>Complete genome sequence of Methanocorpusculum labreanum type strain Z.</title>
        <authorList>
            <person name="Anderson I.J."/>
            <person name="Sieprawska-Lupa M."/>
            <person name="Goltsman E."/>
            <person name="Lapidus A."/>
            <person name="Copeland A."/>
            <person name="Glavina Del Rio T."/>
            <person name="Tice H."/>
            <person name="Dalin E."/>
            <person name="Barry K."/>
            <person name="Pitluck S."/>
            <person name="Hauser L."/>
            <person name="Land M."/>
            <person name="Lucas S."/>
            <person name="Richardson P."/>
            <person name="Whitman W.B."/>
            <person name="Kyrpides N.C."/>
        </authorList>
    </citation>
    <scope>NUCLEOTIDE SEQUENCE [LARGE SCALE GENOMIC DNA]</scope>
    <source>
        <strain>ATCC 43576 / DSM 4855 / Z</strain>
    </source>
</reference>
<gene>
    <name evidence="1" type="primary">rpl30</name>
    <name type="ordered locus">Mlab_0102</name>
</gene>
<protein>
    <recommendedName>
        <fullName evidence="1">Large ribosomal subunit protein uL30</fullName>
    </recommendedName>
    <alternativeName>
        <fullName evidence="2">50S ribosomal protein L30</fullName>
    </alternativeName>
</protein>
<dbReference type="EMBL" id="CP000559">
    <property type="protein sequence ID" value="ABN06279.1"/>
    <property type="molecule type" value="Genomic_DNA"/>
</dbReference>
<dbReference type="RefSeq" id="WP_011832480.1">
    <property type="nucleotide sequence ID" value="NC_008942.1"/>
</dbReference>
<dbReference type="SMR" id="A2SPM3"/>
<dbReference type="STRING" id="410358.Mlab_0102"/>
<dbReference type="GeneID" id="4794977"/>
<dbReference type="KEGG" id="mla:Mlab_0102"/>
<dbReference type="eggNOG" id="arCOG04086">
    <property type="taxonomic scope" value="Archaea"/>
</dbReference>
<dbReference type="HOGENOM" id="CLU_055156_6_0_2"/>
<dbReference type="OrthoDB" id="6379at2157"/>
<dbReference type="Proteomes" id="UP000000365">
    <property type="component" value="Chromosome"/>
</dbReference>
<dbReference type="GO" id="GO:0022625">
    <property type="term" value="C:cytosolic large ribosomal subunit"/>
    <property type="evidence" value="ECO:0007669"/>
    <property type="project" value="TreeGrafter"/>
</dbReference>
<dbReference type="GO" id="GO:0003723">
    <property type="term" value="F:RNA binding"/>
    <property type="evidence" value="ECO:0007669"/>
    <property type="project" value="TreeGrafter"/>
</dbReference>
<dbReference type="GO" id="GO:0003735">
    <property type="term" value="F:structural constituent of ribosome"/>
    <property type="evidence" value="ECO:0007669"/>
    <property type="project" value="InterPro"/>
</dbReference>
<dbReference type="GO" id="GO:0000463">
    <property type="term" value="P:maturation of LSU-rRNA from tricistronic rRNA transcript (SSU-rRNA, 5.8S rRNA, LSU-rRNA)"/>
    <property type="evidence" value="ECO:0007669"/>
    <property type="project" value="TreeGrafter"/>
</dbReference>
<dbReference type="GO" id="GO:0006412">
    <property type="term" value="P:translation"/>
    <property type="evidence" value="ECO:0007669"/>
    <property type="project" value="UniProtKB-UniRule"/>
</dbReference>
<dbReference type="CDD" id="cd01657">
    <property type="entry name" value="Ribosomal_L7_archeal_euk"/>
    <property type="match status" value="1"/>
</dbReference>
<dbReference type="FunFam" id="1.10.15.30:FF:000002">
    <property type="entry name" value="50S ribosomal protein L30"/>
    <property type="match status" value="1"/>
</dbReference>
<dbReference type="Gene3D" id="1.10.15.30">
    <property type="match status" value="1"/>
</dbReference>
<dbReference type="Gene3D" id="3.30.1390.20">
    <property type="entry name" value="Ribosomal protein L30, ferredoxin-like fold domain"/>
    <property type="match status" value="1"/>
</dbReference>
<dbReference type="HAMAP" id="MF_01371_A">
    <property type="entry name" value="Ribosomal_uL30_A"/>
    <property type="match status" value="1"/>
</dbReference>
<dbReference type="InterPro" id="IPR036919">
    <property type="entry name" value="Ribo_uL30_ferredoxin-like_sf"/>
</dbReference>
<dbReference type="InterPro" id="IPR039699">
    <property type="entry name" value="Ribosomal_uL30"/>
</dbReference>
<dbReference type="InterPro" id="IPR005997">
    <property type="entry name" value="Ribosomal_uL30_arc"/>
</dbReference>
<dbReference type="InterPro" id="IPR018038">
    <property type="entry name" value="Ribosomal_uL30_CS"/>
</dbReference>
<dbReference type="InterPro" id="IPR035808">
    <property type="entry name" value="Ribosomal_uL30_euk_arc"/>
</dbReference>
<dbReference type="InterPro" id="IPR016082">
    <property type="entry name" value="Ribosomal_uL30_ferredoxin-like"/>
</dbReference>
<dbReference type="NCBIfam" id="NF004711">
    <property type="entry name" value="PRK06049.1"/>
    <property type="match status" value="1"/>
</dbReference>
<dbReference type="NCBIfam" id="TIGR01309">
    <property type="entry name" value="uL30_arch"/>
    <property type="match status" value="1"/>
</dbReference>
<dbReference type="PANTHER" id="PTHR11524">
    <property type="entry name" value="60S RIBOSOMAL PROTEIN L7"/>
    <property type="match status" value="1"/>
</dbReference>
<dbReference type="PANTHER" id="PTHR11524:SF16">
    <property type="entry name" value="LARGE RIBOSOMAL SUBUNIT PROTEIN UL30"/>
    <property type="match status" value="1"/>
</dbReference>
<dbReference type="Pfam" id="PF00327">
    <property type="entry name" value="Ribosomal_L30"/>
    <property type="match status" value="1"/>
</dbReference>
<dbReference type="SUPFAM" id="SSF55129">
    <property type="entry name" value="Ribosomal protein L30p/L7e"/>
    <property type="match status" value="1"/>
</dbReference>
<dbReference type="PROSITE" id="PS00634">
    <property type="entry name" value="RIBOSOMAL_L30"/>
    <property type="match status" value="1"/>
</dbReference>
<name>RL30_METLZ</name>
<feature type="chain" id="PRO_0000347166" description="Large ribosomal subunit protein uL30">
    <location>
        <begin position="1"/>
        <end position="153"/>
    </location>
</feature>
<evidence type="ECO:0000255" key="1">
    <source>
        <dbReference type="HAMAP-Rule" id="MF_01371"/>
    </source>
</evidence>
<evidence type="ECO:0000305" key="2"/>
<comment type="subunit">
    <text evidence="1">Part of the 50S ribosomal subunit.</text>
</comment>
<comment type="similarity">
    <text evidence="1">Belongs to the universal ribosomal protein uL30 family.</text>
</comment>
<keyword id="KW-1185">Reference proteome</keyword>
<keyword id="KW-0687">Ribonucleoprotein</keyword>
<keyword id="KW-0689">Ribosomal protein</keyword>